<name>ISPF_CUPPJ</name>
<keyword id="KW-0414">Isoprene biosynthesis</keyword>
<keyword id="KW-0456">Lyase</keyword>
<keyword id="KW-0479">Metal-binding</keyword>
<accession>Q472F1</accession>
<gene>
    <name evidence="1" type="primary">ispF</name>
    <name type="ordered locus">Reut_A1362</name>
</gene>
<dbReference type="EC" id="4.6.1.12" evidence="1"/>
<dbReference type="EMBL" id="CP000090">
    <property type="protein sequence ID" value="AAZ60732.1"/>
    <property type="molecule type" value="Genomic_DNA"/>
</dbReference>
<dbReference type="SMR" id="Q472F1"/>
<dbReference type="STRING" id="264198.Reut_A1362"/>
<dbReference type="KEGG" id="reu:Reut_A1362"/>
<dbReference type="eggNOG" id="COG0245">
    <property type="taxonomic scope" value="Bacteria"/>
</dbReference>
<dbReference type="HOGENOM" id="CLU_084630_2_0_4"/>
<dbReference type="OrthoDB" id="9804336at2"/>
<dbReference type="UniPathway" id="UPA00056">
    <property type="reaction ID" value="UER00095"/>
</dbReference>
<dbReference type="GO" id="GO:0008685">
    <property type="term" value="F:2-C-methyl-D-erythritol 2,4-cyclodiphosphate synthase activity"/>
    <property type="evidence" value="ECO:0007669"/>
    <property type="project" value="UniProtKB-UniRule"/>
</dbReference>
<dbReference type="GO" id="GO:0046872">
    <property type="term" value="F:metal ion binding"/>
    <property type="evidence" value="ECO:0007669"/>
    <property type="project" value="UniProtKB-KW"/>
</dbReference>
<dbReference type="GO" id="GO:0019288">
    <property type="term" value="P:isopentenyl diphosphate biosynthetic process, methylerythritol 4-phosphate pathway"/>
    <property type="evidence" value="ECO:0007669"/>
    <property type="project" value="UniProtKB-UniRule"/>
</dbReference>
<dbReference type="GO" id="GO:0016114">
    <property type="term" value="P:terpenoid biosynthetic process"/>
    <property type="evidence" value="ECO:0007669"/>
    <property type="project" value="InterPro"/>
</dbReference>
<dbReference type="CDD" id="cd00554">
    <property type="entry name" value="MECDP_synthase"/>
    <property type="match status" value="1"/>
</dbReference>
<dbReference type="FunFam" id="3.30.1330.50:FF:000001">
    <property type="entry name" value="2-C-methyl-D-erythritol 2,4-cyclodiphosphate synthase"/>
    <property type="match status" value="1"/>
</dbReference>
<dbReference type="Gene3D" id="3.30.1330.50">
    <property type="entry name" value="2-C-methyl-D-erythritol 2,4-cyclodiphosphate synthase"/>
    <property type="match status" value="1"/>
</dbReference>
<dbReference type="HAMAP" id="MF_00107">
    <property type="entry name" value="IspF"/>
    <property type="match status" value="1"/>
</dbReference>
<dbReference type="InterPro" id="IPR003526">
    <property type="entry name" value="MECDP_synthase"/>
</dbReference>
<dbReference type="InterPro" id="IPR020555">
    <property type="entry name" value="MECDP_synthase_CS"/>
</dbReference>
<dbReference type="InterPro" id="IPR036571">
    <property type="entry name" value="MECDP_synthase_sf"/>
</dbReference>
<dbReference type="NCBIfam" id="TIGR00151">
    <property type="entry name" value="ispF"/>
    <property type="match status" value="1"/>
</dbReference>
<dbReference type="PANTHER" id="PTHR43181">
    <property type="entry name" value="2-C-METHYL-D-ERYTHRITOL 2,4-CYCLODIPHOSPHATE SYNTHASE, CHLOROPLASTIC"/>
    <property type="match status" value="1"/>
</dbReference>
<dbReference type="PANTHER" id="PTHR43181:SF1">
    <property type="entry name" value="2-C-METHYL-D-ERYTHRITOL 2,4-CYCLODIPHOSPHATE SYNTHASE, CHLOROPLASTIC"/>
    <property type="match status" value="1"/>
</dbReference>
<dbReference type="Pfam" id="PF02542">
    <property type="entry name" value="YgbB"/>
    <property type="match status" value="1"/>
</dbReference>
<dbReference type="SUPFAM" id="SSF69765">
    <property type="entry name" value="IpsF-like"/>
    <property type="match status" value="1"/>
</dbReference>
<dbReference type="PROSITE" id="PS01350">
    <property type="entry name" value="ISPF"/>
    <property type="match status" value="1"/>
</dbReference>
<comment type="function">
    <text evidence="1">Involved in the biosynthesis of isopentenyl diphosphate (IPP) and dimethylallyl diphosphate (DMAPP), two major building blocks of isoprenoid compounds. Catalyzes the conversion of 4-diphosphocytidyl-2-C-methyl-D-erythritol 2-phosphate (CDP-ME2P) to 2-C-methyl-D-erythritol 2,4-cyclodiphosphate (ME-CPP) with a corresponding release of cytidine 5-monophosphate (CMP).</text>
</comment>
<comment type="catalytic activity">
    <reaction evidence="1">
        <text>4-CDP-2-C-methyl-D-erythritol 2-phosphate = 2-C-methyl-D-erythritol 2,4-cyclic diphosphate + CMP</text>
        <dbReference type="Rhea" id="RHEA:23864"/>
        <dbReference type="ChEBI" id="CHEBI:57919"/>
        <dbReference type="ChEBI" id="CHEBI:58483"/>
        <dbReference type="ChEBI" id="CHEBI:60377"/>
        <dbReference type="EC" id="4.6.1.12"/>
    </reaction>
</comment>
<comment type="cofactor">
    <cofactor evidence="1">
        <name>a divalent metal cation</name>
        <dbReference type="ChEBI" id="CHEBI:60240"/>
    </cofactor>
    <text evidence="1">Binds 1 divalent metal cation per subunit.</text>
</comment>
<comment type="pathway">
    <text evidence="1">Isoprenoid biosynthesis; isopentenyl diphosphate biosynthesis via DXP pathway; isopentenyl diphosphate from 1-deoxy-D-xylulose 5-phosphate: step 4/6.</text>
</comment>
<comment type="subunit">
    <text evidence="1">Homotrimer.</text>
</comment>
<comment type="similarity">
    <text evidence="1">Belongs to the IspF family.</text>
</comment>
<protein>
    <recommendedName>
        <fullName evidence="1">2-C-methyl-D-erythritol 2,4-cyclodiphosphate synthase</fullName>
        <shortName evidence="1">MECDP-synthase</shortName>
        <shortName evidence="1">MECPP-synthase</shortName>
        <shortName evidence="1">MECPS</shortName>
        <ecNumber evidence="1">4.6.1.12</ecNumber>
    </recommendedName>
</protein>
<evidence type="ECO:0000255" key="1">
    <source>
        <dbReference type="HAMAP-Rule" id="MF_00107"/>
    </source>
</evidence>
<feature type="chain" id="PRO_0000237747" description="2-C-methyl-D-erythritol 2,4-cyclodiphosphate synthase">
    <location>
        <begin position="1"/>
        <end position="169"/>
    </location>
</feature>
<feature type="binding site" evidence="1">
    <location>
        <begin position="13"/>
        <end position="15"/>
    </location>
    <ligand>
        <name>4-CDP-2-C-methyl-D-erythritol 2-phosphate</name>
        <dbReference type="ChEBI" id="CHEBI:57919"/>
    </ligand>
</feature>
<feature type="binding site" evidence="1">
    <location>
        <position position="13"/>
    </location>
    <ligand>
        <name>a divalent metal cation</name>
        <dbReference type="ChEBI" id="CHEBI:60240"/>
    </ligand>
</feature>
<feature type="binding site" evidence="1">
    <location>
        <position position="15"/>
    </location>
    <ligand>
        <name>a divalent metal cation</name>
        <dbReference type="ChEBI" id="CHEBI:60240"/>
    </ligand>
</feature>
<feature type="binding site" evidence="1">
    <location>
        <begin position="39"/>
        <end position="40"/>
    </location>
    <ligand>
        <name>4-CDP-2-C-methyl-D-erythritol 2-phosphate</name>
        <dbReference type="ChEBI" id="CHEBI:57919"/>
    </ligand>
</feature>
<feature type="binding site" evidence="1">
    <location>
        <position position="47"/>
    </location>
    <ligand>
        <name>a divalent metal cation</name>
        <dbReference type="ChEBI" id="CHEBI:60240"/>
    </ligand>
</feature>
<feature type="binding site" evidence="1">
    <location>
        <begin position="61"/>
        <end position="63"/>
    </location>
    <ligand>
        <name>4-CDP-2-C-methyl-D-erythritol 2-phosphate</name>
        <dbReference type="ChEBI" id="CHEBI:57919"/>
    </ligand>
</feature>
<feature type="binding site" evidence="1">
    <location>
        <begin position="66"/>
        <end position="70"/>
    </location>
    <ligand>
        <name>4-CDP-2-C-methyl-D-erythritol 2-phosphate</name>
        <dbReference type="ChEBI" id="CHEBI:57919"/>
    </ligand>
</feature>
<feature type="binding site" evidence="1">
    <location>
        <position position="144"/>
    </location>
    <ligand>
        <name>4-CDP-2-C-methyl-D-erythritol 2-phosphate</name>
        <dbReference type="ChEBI" id="CHEBI:57919"/>
    </ligand>
</feature>
<feature type="binding site" evidence="1">
    <location>
        <position position="147"/>
    </location>
    <ligand>
        <name>4-CDP-2-C-methyl-D-erythritol 2-phosphate</name>
        <dbReference type="ChEBI" id="CHEBI:57919"/>
    </ligand>
</feature>
<feature type="site" description="Transition state stabilizer" evidence="1">
    <location>
        <position position="39"/>
    </location>
</feature>
<feature type="site" description="Transition state stabilizer" evidence="1">
    <location>
        <position position="138"/>
    </location>
</feature>
<reference key="1">
    <citation type="journal article" date="2010" name="PLoS ONE">
        <title>The complete multipartite genome sequence of Cupriavidus necator JMP134, a versatile pollutant degrader.</title>
        <authorList>
            <person name="Lykidis A."/>
            <person name="Perez-Pantoja D."/>
            <person name="Ledger T."/>
            <person name="Mavromatis K."/>
            <person name="Anderson I.J."/>
            <person name="Ivanova N.N."/>
            <person name="Hooper S.D."/>
            <person name="Lapidus A."/>
            <person name="Lucas S."/>
            <person name="Gonzalez B."/>
            <person name="Kyrpides N.C."/>
        </authorList>
    </citation>
    <scope>NUCLEOTIDE SEQUENCE [LARGE SCALE GENOMIC DNA]</scope>
    <source>
        <strain>JMP134 / LMG 1197</strain>
    </source>
</reference>
<proteinExistence type="inferred from homology"/>
<organism>
    <name type="scientific">Cupriavidus pinatubonensis (strain JMP 134 / LMG 1197)</name>
    <name type="common">Cupriavidus necator (strain JMP 134)</name>
    <dbReference type="NCBI Taxonomy" id="264198"/>
    <lineage>
        <taxon>Bacteria</taxon>
        <taxon>Pseudomonadati</taxon>
        <taxon>Pseudomonadota</taxon>
        <taxon>Betaproteobacteria</taxon>
        <taxon>Burkholderiales</taxon>
        <taxon>Burkholderiaceae</taxon>
        <taxon>Cupriavidus</taxon>
    </lineage>
</organism>
<sequence length="169" mass="17882">MMPFDIRVGQGYDVHALVPGRKLILGGVHIPHDRGLLGHSDADALLHAITDALFGAAGLGDIGRHFPDTDAQFAGADSRVLLREAARRVREAGYEIGNVDASVIAQQPKLAPHIPGMVANIADDLGLPATRCNVKAKTNEKLGFEGRQEGIVAQAAVLIWRGAIADAQD</sequence>